<organism>
    <name type="scientific">Prochlorococcus marinus (strain MIT 9303)</name>
    <dbReference type="NCBI Taxonomy" id="59922"/>
    <lineage>
        <taxon>Bacteria</taxon>
        <taxon>Bacillati</taxon>
        <taxon>Cyanobacteriota</taxon>
        <taxon>Cyanophyceae</taxon>
        <taxon>Synechococcales</taxon>
        <taxon>Prochlorococcaceae</taxon>
        <taxon>Prochlorococcus</taxon>
    </lineage>
</organism>
<feature type="chain" id="PRO_1000003559" description="Small ribosomal subunit protein bS18">
    <location>
        <begin position="1"/>
        <end position="73"/>
    </location>
</feature>
<reference key="1">
    <citation type="journal article" date="2007" name="PLoS Genet.">
        <title>Patterns and implications of gene gain and loss in the evolution of Prochlorococcus.</title>
        <authorList>
            <person name="Kettler G.C."/>
            <person name="Martiny A.C."/>
            <person name="Huang K."/>
            <person name="Zucker J."/>
            <person name="Coleman M.L."/>
            <person name="Rodrigue S."/>
            <person name="Chen F."/>
            <person name="Lapidus A."/>
            <person name="Ferriera S."/>
            <person name="Johnson J."/>
            <person name="Steglich C."/>
            <person name="Church G.M."/>
            <person name="Richardson P."/>
            <person name="Chisholm S.W."/>
        </authorList>
    </citation>
    <scope>NUCLEOTIDE SEQUENCE [LARGE SCALE GENOMIC DNA]</scope>
    <source>
        <strain>MIT 9303</strain>
    </source>
</reference>
<accession>A2C9R4</accession>
<protein>
    <recommendedName>
        <fullName evidence="1">Small ribosomal subunit protein bS18</fullName>
    </recommendedName>
    <alternativeName>
        <fullName evidence="2">30S ribosomal protein S18</fullName>
    </alternativeName>
</protein>
<name>RS18_PROM3</name>
<keyword id="KW-0687">Ribonucleoprotein</keyword>
<keyword id="KW-0689">Ribosomal protein</keyword>
<keyword id="KW-0694">RNA-binding</keyword>
<keyword id="KW-0699">rRNA-binding</keyword>
<comment type="function">
    <text evidence="1">Binds as a heterodimer with protein bS6 to the central domain of the 16S rRNA, where it helps stabilize the platform of the 30S subunit.</text>
</comment>
<comment type="subunit">
    <text evidence="1">Part of the 30S ribosomal subunit. Forms a tight heterodimer with protein bS6.</text>
</comment>
<comment type="similarity">
    <text evidence="1">Belongs to the bacterial ribosomal protein bS18 family.</text>
</comment>
<sequence length="73" mass="8311">MSSSFFKKRLSPIKPGDPIDYKDVDLLKKFITDRGKILPRRLTGLTSKQQRDLTNAVKRARIIALLPFVNPEG</sequence>
<dbReference type="EMBL" id="CP000554">
    <property type="protein sequence ID" value="ABM78224.1"/>
    <property type="molecule type" value="Genomic_DNA"/>
</dbReference>
<dbReference type="RefSeq" id="WP_011130118.1">
    <property type="nucleotide sequence ID" value="NC_008820.1"/>
</dbReference>
<dbReference type="SMR" id="A2C9R4"/>
<dbReference type="STRING" id="59922.P9303_14781"/>
<dbReference type="KEGG" id="pmf:P9303_14781"/>
<dbReference type="HOGENOM" id="CLU_148710_2_3_3"/>
<dbReference type="BioCyc" id="PMAR59922:G1G80-1277-MONOMER"/>
<dbReference type="Proteomes" id="UP000002274">
    <property type="component" value="Chromosome"/>
</dbReference>
<dbReference type="GO" id="GO:0022627">
    <property type="term" value="C:cytosolic small ribosomal subunit"/>
    <property type="evidence" value="ECO:0007669"/>
    <property type="project" value="TreeGrafter"/>
</dbReference>
<dbReference type="GO" id="GO:0070181">
    <property type="term" value="F:small ribosomal subunit rRNA binding"/>
    <property type="evidence" value="ECO:0007669"/>
    <property type="project" value="TreeGrafter"/>
</dbReference>
<dbReference type="GO" id="GO:0003735">
    <property type="term" value="F:structural constituent of ribosome"/>
    <property type="evidence" value="ECO:0007669"/>
    <property type="project" value="InterPro"/>
</dbReference>
<dbReference type="GO" id="GO:0006412">
    <property type="term" value="P:translation"/>
    <property type="evidence" value="ECO:0007669"/>
    <property type="project" value="UniProtKB-UniRule"/>
</dbReference>
<dbReference type="FunFam" id="4.10.640.10:FF:000002">
    <property type="entry name" value="30S ribosomal protein S18, chloroplastic"/>
    <property type="match status" value="1"/>
</dbReference>
<dbReference type="Gene3D" id="4.10.640.10">
    <property type="entry name" value="Ribosomal protein S18"/>
    <property type="match status" value="1"/>
</dbReference>
<dbReference type="HAMAP" id="MF_00270">
    <property type="entry name" value="Ribosomal_bS18"/>
    <property type="match status" value="1"/>
</dbReference>
<dbReference type="InterPro" id="IPR001648">
    <property type="entry name" value="Ribosomal_bS18"/>
</dbReference>
<dbReference type="InterPro" id="IPR018275">
    <property type="entry name" value="Ribosomal_bS18_CS"/>
</dbReference>
<dbReference type="InterPro" id="IPR036870">
    <property type="entry name" value="Ribosomal_bS18_sf"/>
</dbReference>
<dbReference type="NCBIfam" id="TIGR00165">
    <property type="entry name" value="S18"/>
    <property type="match status" value="1"/>
</dbReference>
<dbReference type="PANTHER" id="PTHR13479">
    <property type="entry name" value="30S RIBOSOMAL PROTEIN S18"/>
    <property type="match status" value="1"/>
</dbReference>
<dbReference type="PANTHER" id="PTHR13479:SF40">
    <property type="entry name" value="SMALL RIBOSOMAL SUBUNIT PROTEIN BS18M"/>
    <property type="match status" value="1"/>
</dbReference>
<dbReference type="Pfam" id="PF01084">
    <property type="entry name" value="Ribosomal_S18"/>
    <property type="match status" value="1"/>
</dbReference>
<dbReference type="PRINTS" id="PR00974">
    <property type="entry name" value="RIBOSOMALS18"/>
</dbReference>
<dbReference type="SUPFAM" id="SSF46911">
    <property type="entry name" value="Ribosomal protein S18"/>
    <property type="match status" value="1"/>
</dbReference>
<dbReference type="PROSITE" id="PS00057">
    <property type="entry name" value="RIBOSOMAL_S18"/>
    <property type="match status" value="1"/>
</dbReference>
<proteinExistence type="inferred from homology"/>
<evidence type="ECO:0000255" key="1">
    <source>
        <dbReference type="HAMAP-Rule" id="MF_00270"/>
    </source>
</evidence>
<evidence type="ECO:0000305" key="2"/>
<gene>
    <name evidence="1" type="primary">rpsR</name>
    <name evidence="1" type="synonym">rps18</name>
    <name type="ordered locus">P9303_14781</name>
</gene>